<organism>
    <name type="scientific">Stenotrophomonas maltophilia (strain R551-3)</name>
    <dbReference type="NCBI Taxonomy" id="391008"/>
    <lineage>
        <taxon>Bacteria</taxon>
        <taxon>Pseudomonadati</taxon>
        <taxon>Pseudomonadota</taxon>
        <taxon>Gammaproteobacteria</taxon>
        <taxon>Lysobacterales</taxon>
        <taxon>Lysobacteraceae</taxon>
        <taxon>Stenotrophomonas</taxon>
        <taxon>Stenotrophomonas maltophilia group</taxon>
    </lineage>
</organism>
<evidence type="ECO:0000255" key="1">
    <source>
        <dbReference type="HAMAP-Rule" id="MF_01678"/>
    </source>
</evidence>
<evidence type="ECO:0000305" key="2"/>
<reference key="1">
    <citation type="submission" date="2008-06" db="EMBL/GenBank/DDBJ databases">
        <title>Complete sequence of Stenotrophomonas maltophilia R551-3.</title>
        <authorList>
            <consortium name="US DOE Joint Genome Institute"/>
            <person name="Lucas S."/>
            <person name="Copeland A."/>
            <person name="Lapidus A."/>
            <person name="Glavina del Rio T."/>
            <person name="Dalin E."/>
            <person name="Tice H."/>
            <person name="Pitluck S."/>
            <person name="Chain P."/>
            <person name="Malfatti S."/>
            <person name="Shin M."/>
            <person name="Vergez L."/>
            <person name="Lang D."/>
            <person name="Schmutz J."/>
            <person name="Larimer F."/>
            <person name="Land M."/>
            <person name="Hauser L."/>
            <person name="Kyrpides N."/>
            <person name="Mikhailova N."/>
            <person name="Taghavi S."/>
            <person name="Monchy S."/>
            <person name="Newman L."/>
            <person name="Vangronsveld J."/>
            <person name="van der Lelie D."/>
            <person name="Richardson P."/>
        </authorList>
    </citation>
    <scope>NUCLEOTIDE SEQUENCE [LARGE SCALE GENOMIC DNA]</scope>
    <source>
        <strain>R551-3</strain>
    </source>
</reference>
<proteinExistence type="inferred from homology"/>
<sequence length="354" mass="37264">MNTASDIDYARYDHIRPILWTGEALQLLDQRKLPFVVEHVVCHDSDEVAASIHALTVRGAPAIGIAAAWGVVLAARDVQAADGAHALQQLEPALQRLNASRPTAVNLAWALARMRRCLSAAGADWKALLEAEAQAIAEEDLAANRHMGALGAGLIEAGSGVLTHCNTGSLATAGFGTALGVIRAGMAQHRIARVFAGETRPWLQGARLTVWELQQDGIDATLIADSAASHLMKTGAVQWVIVGADRICANGDTANKIGTYQLAIAARHHGVKFMVVAPSSTVDMETVDGSQIEIEQRDPGELYGVGGTRTVAEGIAAWNPVFDVTPGELIDAIVTERGVILNPTAGNMRAAFGG</sequence>
<dbReference type="EC" id="5.3.1.23" evidence="1"/>
<dbReference type="EMBL" id="CP001111">
    <property type="protein sequence ID" value="ACF52279.1"/>
    <property type="molecule type" value="Genomic_DNA"/>
</dbReference>
<dbReference type="RefSeq" id="WP_012511547.1">
    <property type="nucleotide sequence ID" value="NC_011071.1"/>
</dbReference>
<dbReference type="SMR" id="B4SP84"/>
<dbReference type="STRING" id="391008.Smal_2579"/>
<dbReference type="KEGG" id="smt:Smal_2579"/>
<dbReference type="eggNOG" id="COG0182">
    <property type="taxonomic scope" value="Bacteria"/>
</dbReference>
<dbReference type="HOGENOM" id="CLU_016218_1_2_6"/>
<dbReference type="OrthoDB" id="9803436at2"/>
<dbReference type="UniPathway" id="UPA00904">
    <property type="reaction ID" value="UER00874"/>
</dbReference>
<dbReference type="Proteomes" id="UP000001867">
    <property type="component" value="Chromosome"/>
</dbReference>
<dbReference type="GO" id="GO:0046523">
    <property type="term" value="F:S-methyl-5-thioribose-1-phosphate isomerase activity"/>
    <property type="evidence" value="ECO:0007669"/>
    <property type="project" value="UniProtKB-UniRule"/>
</dbReference>
<dbReference type="GO" id="GO:0019509">
    <property type="term" value="P:L-methionine salvage from methylthioadenosine"/>
    <property type="evidence" value="ECO:0007669"/>
    <property type="project" value="UniProtKB-UniRule"/>
</dbReference>
<dbReference type="FunFam" id="1.20.120.420:FF:000007">
    <property type="entry name" value="Methylthioribose-1-phosphate isomerase"/>
    <property type="match status" value="1"/>
</dbReference>
<dbReference type="FunFam" id="3.40.50.10470:FF:000006">
    <property type="entry name" value="Methylthioribose-1-phosphate isomerase"/>
    <property type="match status" value="1"/>
</dbReference>
<dbReference type="Gene3D" id="1.20.120.420">
    <property type="entry name" value="translation initiation factor eif-2b, domain 1"/>
    <property type="match status" value="1"/>
</dbReference>
<dbReference type="Gene3D" id="3.40.50.10470">
    <property type="entry name" value="Translation initiation factor eif-2b, domain 2"/>
    <property type="match status" value="1"/>
</dbReference>
<dbReference type="HAMAP" id="MF_01678">
    <property type="entry name" value="Salvage_MtnA"/>
    <property type="match status" value="1"/>
</dbReference>
<dbReference type="InterPro" id="IPR000649">
    <property type="entry name" value="IF-2B-related"/>
</dbReference>
<dbReference type="InterPro" id="IPR005251">
    <property type="entry name" value="IF-M1Pi"/>
</dbReference>
<dbReference type="InterPro" id="IPR042529">
    <property type="entry name" value="IF_2B-like_C"/>
</dbReference>
<dbReference type="InterPro" id="IPR011559">
    <property type="entry name" value="Initiation_fac_2B_a/b/d"/>
</dbReference>
<dbReference type="InterPro" id="IPR027363">
    <property type="entry name" value="M1Pi_N"/>
</dbReference>
<dbReference type="InterPro" id="IPR037171">
    <property type="entry name" value="NagB/RpiA_transferase-like"/>
</dbReference>
<dbReference type="NCBIfam" id="TIGR00524">
    <property type="entry name" value="eIF-2B_rel"/>
    <property type="match status" value="1"/>
</dbReference>
<dbReference type="NCBIfam" id="NF004326">
    <property type="entry name" value="PRK05720.1"/>
    <property type="match status" value="1"/>
</dbReference>
<dbReference type="NCBIfam" id="TIGR00512">
    <property type="entry name" value="salvage_mtnA"/>
    <property type="match status" value="1"/>
</dbReference>
<dbReference type="PANTHER" id="PTHR43475">
    <property type="entry name" value="METHYLTHIORIBOSE-1-PHOSPHATE ISOMERASE"/>
    <property type="match status" value="1"/>
</dbReference>
<dbReference type="PANTHER" id="PTHR43475:SF1">
    <property type="entry name" value="METHYLTHIORIBOSE-1-PHOSPHATE ISOMERASE"/>
    <property type="match status" value="1"/>
</dbReference>
<dbReference type="Pfam" id="PF01008">
    <property type="entry name" value="IF-2B"/>
    <property type="match status" value="1"/>
</dbReference>
<dbReference type="SUPFAM" id="SSF100950">
    <property type="entry name" value="NagB/RpiA/CoA transferase-like"/>
    <property type="match status" value="1"/>
</dbReference>
<comment type="function">
    <text evidence="1">Catalyzes the interconversion of methylthioribose-1-phosphate (MTR-1-P) into methylthioribulose-1-phosphate (MTRu-1-P).</text>
</comment>
<comment type="catalytic activity">
    <reaction evidence="1">
        <text>5-(methylsulfanyl)-alpha-D-ribose 1-phosphate = 5-(methylsulfanyl)-D-ribulose 1-phosphate</text>
        <dbReference type="Rhea" id="RHEA:19989"/>
        <dbReference type="ChEBI" id="CHEBI:58533"/>
        <dbReference type="ChEBI" id="CHEBI:58548"/>
        <dbReference type="EC" id="5.3.1.23"/>
    </reaction>
</comment>
<comment type="pathway">
    <text evidence="1">Amino-acid biosynthesis; L-methionine biosynthesis via salvage pathway; L-methionine from S-methyl-5-thio-alpha-D-ribose 1-phosphate: step 1/6.</text>
</comment>
<comment type="similarity">
    <text evidence="2">Belongs to the eIF-2B alpha/beta/delta subunits family. MtnA subfamily.</text>
</comment>
<accession>B4SP84</accession>
<gene>
    <name evidence="1" type="primary">mtnA</name>
    <name type="ordered locus">Smal_2579</name>
</gene>
<name>MTNA_STRM5</name>
<protein>
    <recommendedName>
        <fullName evidence="1">Methylthioribose-1-phosphate isomerase</fullName>
        <shortName evidence="1">M1Pi</shortName>
        <shortName evidence="1">MTR-1-P isomerase</shortName>
        <ecNumber evidence="1">5.3.1.23</ecNumber>
    </recommendedName>
    <alternativeName>
        <fullName evidence="1">S-methyl-5-thioribose-1-phosphate isomerase</fullName>
    </alternativeName>
</protein>
<feature type="chain" id="PRO_0000357242" description="Methylthioribose-1-phosphate isomerase">
    <location>
        <begin position="1"/>
        <end position="354"/>
    </location>
</feature>
<feature type="active site" description="Proton donor" evidence="1">
    <location>
        <position position="245"/>
    </location>
</feature>
<feature type="binding site" evidence="1">
    <location>
        <begin position="58"/>
        <end position="60"/>
    </location>
    <ligand>
        <name>substrate</name>
    </ligand>
</feature>
<feature type="binding site" evidence="1">
    <location>
        <position position="101"/>
    </location>
    <ligand>
        <name>substrate</name>
    </ligand>
</feature>
<feature type="binding site" evidence="1">
    <location>
        <position position="204"/>
    </location>
    <ligand>
        <name>substrate</name>
    </ligand>
</feature>
<feature type="binding site" evidence="1">
    <location>
        <begin position="255"/>
        <end position="256"/>
    </location>
    <ligand>
        <name>substrate</name>
    </ligand>
</feature>
<feature type="site" description="Transition state stabilizer" evidence="1">
    <location>
        <position position="165"/>
    </location>
</feature>
<keyword id="KW-0028">Amino-acid biosynthesis</keyword>
<keyword id="KW-0413">Isomerase</keyword>
<keyword id="KW-0486">Methionine biosynthesis</keyword>